<dbReference type="EMBL" id="M37308">
    <property type="protein sequence ID" value="AAA26457.1"/>
    <property type="molecule type" value="Genomic_DNA"/>
</dbReference>
<dbReference type="EMBL" id="X12757">
    <property type="protein sequence ID" value="CAA31248.1"/>
    <property type="molecule type" value="Genomic_DNA"/>
</dbReference>
<dbReference type="PIR" id="S01149">
    <property type="entry name" value="S01149"/>
</dbReference>
<dbReference type="RefSeq" id="WP_011390992.1">
    <property type="nucleotide sequence ID" value="NZ_DAMDTZ010000099.1"/>
</dbReference>
<dbReference type="SMR" id="P15015"/>
<dbReference type="OMA" id="NQIFWLV"/>
<dbReference type="GO" id="GO:0005886">
    <property type="term" value="C:plasma membrane"/>
    <property type="evidence" value="ECO:0007669"/>
    <property type="project" value="UniProtKB-UniRule"/>
</dbReference>
<dbReference type="GO" id="GO:0042717">
    <property type="term" value="C:plasma membrane-derived chromatophore membrane"/>
    <property type="evidence" value="ECO:0007669"/>
    <property type="project" value="UniProtKB-SubCell"/>
</dbReference>
<dbReference type="GO" id="GO:0045259">
    <property type="term" value="C:proton-transporting ATP synthase complex"/>
    <property type="evidence" value="ECO:0007669"/>
    <property type="project" value="UniProtKB-KW"/>
</dbReference>
<dbReference type="GO" id="GO:0046933">
    <property type="term" value="F:proton-transporting ATP synthase activity, rotational mechanism"/>
    <property type="evidence" value="ECO:0007669"/>
    <property type="project" value="UniProtKB-UniRule"/>
</dbReference>
<dbReference type="GO" id="GO:0046961">
    <property type="term" value="F:proton-transporting ATPase activity, rotational mechanism"/>
    <property type="evidence" value="ECO:0007669"/>
    <property type="project" value="TreeGrafter"/>
</dbReference>
<dbReference type="GO" id="GO:0006086">
    <property type="term" value="P:pyruvate decarboxylation to acetyl-CoA"/>
    <property type="evidence" value="ECO:0000305"/>
    <property type="project" value="MGI"/>
</dbReference>
<dbReference type="CDD" id="cd06503">
    <property type="entry name" value="ATP-synt_Fo_b"/>
    <property type="match status" value="1"/>
</dbReference>
<dbReference type="HAMAP" id="MF_01398">
    <property type="entry name" value="ATP_synth_b_bprime"/>
    <property type="match status" value="1"/>
</dbReference>
<dbReference type="InterPro" id="IPR002146">
    <property type="entry name" value="ATP_synth_b/b'su_bac/chlpt"/>
</dbReference>
<dbReference type="InterPro" id="IPR050059">
    <property type="entry name" value="ATP_synthase_B_chain"/>
</dbReference>
<dbReference type="PANTHER" id="PTHR33445:SF1">
    <property type="entry name" value="ATP SYNTHASE SUBUNIT B"/>
    <property type="match status" value="1"/>
</dbReference>
<dbReference type="PANTHER" id="PTHR33445">
    <property type="entry name" value="ATP SYNTHASE SUBUNIT B', CHLOROPLASTIC"/>
    <property type="match status" value="1"/>
</dbReference>
<dbReference type="Pfam" id="PF00430">
    <property type="entry name" value="ATP-synt_B"/>
    <property type="match status" value="1"/>
</dbReference>
<sequence length="161" mass="17257">MPQFDPSSFPSQIVWLVIALVAMYFVMSRLAIPRLAEVLEQRQRLINDDLKQAEALKAETEAAIAAYETALAEARARAHDEIRAVTEAAAKAAEARNAEVAKALNTRIKDGEARIVQARDEALTHVREVAGAVASDIVGKLAGLRVDDAALTAAVAAAIKE</sequence>
<comment type="function">
    <text evidence="1">F(1)F(0) ATP synthase produces ATP from ADP in the presence of a proton or sodium gradient. F-type ATPases consist of two structural domains, F(1) containing the extramembraneous catalytic core and F(0) containing the membrane proton channel, linked together by a central stalk and a peripheral stalk. During catalysis, ATP synthesis in the catalytic domain of F(1) is coupled via a rotary mechanism of the central stalk subunits to proton translocation (By similarity).</text>
</comment>
<comment type="function">
    <text evidence="1">Component of the F(0) channel, it forms part of the peripheral stalk, linking F(1) to F(0). The b'-subunit is a diverged and duplicated form of b found in plants and photosynthetic bacteria (By similarity).</text>
</comment>
<comment type="subunit">
    <text evidence="1">F-type ATPases have 2 components, F(1) - the catalytic core - and F(0) - the membrane proton channel. F(1) has five subunits: alpha(3), beta(3), gamma(1), delta(1), epsilon(1). F(0) has four main subunits: a(1), b(1), b'(1) and c(10-14). The alpha and beta chains form an alternating ring which encloses part of the gamma chain. F(1) is attached to F(0) by a central stalk formed by the gamma and epsilon chains, while a peripheral stalk is formed by the delta, b and b' chains (By similarity).</text>
</comment>
<comment type="subcellular location">
    <subcellularLocation>
        <location evidence="1">Cellular chromatophore membrane</location>
        <topology evidence="1">Single-pass membrane protein</topology>
    </subcellularLocation>
</comment>
<comment type="similarity">
    <text evidence="4">Belongs to the ATPase B chain family.</text>
</comment>
<accession>P15015</accession>
<evidence type="ECO:0000250" key="1"/>
<evidence type="ECO:0000255" key="2"/>
<evidence type="ECO:0000303" key="3">
    <source>
    </source>
</evidence>
<evidence type="ECO:0000305" key="4"/>
<protein>
    <recommendedName>
        <fullName>ATP synthase subunit b'</fullName>
    </recommendedName>
    <alternativeName>
        <fullName evidence="3">ATP synthase F(0) sector subunit b'</fullName>
    </alternativeName>
    <alternativeName>
        <fullName>ATPase subunit II</fullName>
    </alternativeName>
    <alternativeName>
        <fullName>F-type ATPase subunit b'</fullName>
        <shortName>F-ATPase subunit b'</shortName>
    </alternativeName>
</protein>
<name>ATPF2_RHORU</name>
<proteinExistence type="inferred from homology"/>
<reference key="1">
    <citation type="journal article" date="1988" name="Biochem. J.">
        <title>DNA sequence of a gene cluster coding for subunits of the F0 membrane sector of ATP synthase in Rhodospirillum rubrum. Support for modular evolution of the F1 and F0 sectors.</title>
        <authorList>
            <person name="Falk G."/>
            <person name="Walker J.E."/>
        </authorList>
    </citation>
    <scope>NUCLEOTIDE SEQUENCE [GENOMIC DNA]</scope>
</reference>
<keyword id="KW-0066">ATP synthesis</keyword>
<keyword id="KW-0138">CF(0)</keyword>
<keyword id="KW-0375">Hydrogen ion transport</keyword>
<keyword id="KW-0406">Ion transport</keyword>
<keyword id="KW-0472">Membrane</keyword>
<keyword id="KW-0812">Transmembrane</keyword>
<keyword id="KW-1133">Transmembrane helix</keyword>
<keyword id="KW-0813">Transport</keyword>
<feature type="chain" id="PRO_0000082427" description="ATP synthase subunit b'">
    <location>
        <begin position="1"/>
        <end position="161"/>
    </location>
</feature>
<feature type="transmembrane region" description="Helical" evidence="2">
    <location>
        <begin position="13"/>
        <end position="33"/>
    </location>
</feature>
<gene>
    <name type="primary">atpF2</name>
    <name evidence="3" type="synonym">atpF</name>
    <name type="synonym">atpG</name>
</gene>
<organism>
    <name type="scientific">Rhodospirillum rubrum</name>
    <dbReference type="NCBI Taxonomy" id="1085"/>
    <lineage>
        <taxon>Bacteria</taxon>
        <taxon>Pseudomonadati</taxon>
        <taxon>Pseudomonadota</taxon>
        <taxon>Alphaproteobacteria</taxon>
        <taxon>Rhodospirillales</taxon>
        <taxon>Rhodospirillaceae</taxon>
        <taxon>Rhodospirillum</taxon>
    </lineage>
</organism>